<gene>
    <name evidence="1" type="primary">metK</name>
    <name type="ordered locus">Sbal_0826</name>
</gene>
<reference key="1">
    <citation type="submission" date="2007-02" db="EMBL/GenBank/DDBJ databases">
        <title>Complete sequence of chromosome of Shewanella baltica OS155.</title>
        <authorList>
            <consortium name="US DOE Joint Genome Institute"/>
            <person name="Copeland A."/>
            <person name="Lucas S."/>
            <person name="Lapidus A."/>
            <person name="Barry K."/>
            <person name="Detter J.C."/>
            <person name="Glavina del Rio T."/>
            <person name="Hammon N."/>
            <person name="Israni S."/>
            <person name="Dalin E."/>
            <person name="Tice H."/>
            <person name="Pitluck S."/>
            <person name="Sims D.R."/>
            <person name="Brettin T."/>
            <person name="Bruce D."/>
            <person name="Han C."/>
            <person name="Tapia R."/>
            <person name="Brainard J."/>
            <person name="Schmutz J."/>
            <person name="Larimer F."/>
            <person name="Land M."/>
            <person name="Hauser L."/>
            <person name="Kyrpides N."/>
            <person name="Mikhailova N."/>
            <person name="Brettar I."/>
            <person name="Klappenbach J."/>
            <person name="Konstantinidis K."/>
            <person name="Rodrigues J."/>
            <person name="Tiedje J."/>
            <person name="Richardson P."/>
        </authorList>
    </citation>
    <scope>NUCLEOTIDE SEQUENCE [LARGE SCALE GENOMIC DNA]</scope>
    <source>
        <strain>OS155 / ATCC BAA-1091</strain>
    </source>
</reference>
<comment type="function">
    <text evidence="1">Catalyzes the formation of S-adenosylmethionine (AdoMet) from methionine and ATP. The overall synthetic reaction is composed of two sequential steps, AdoMet formation and the subsequent tripolyphosphate hydrolysis which occurs prior to release of AdoMet from the enzyme.</text>
</comment>
<comment type="catalytic activity">
    <reaction evidence="1">
        <text>L-methionine + ATP + H2O = S-adenosyl-L-methionine + phosphate + diphosphate</text>
        <dbReference type="Rhea" id="RHEA:21080"/>
        <dbReference type="ChEBI" id="CHEBI:15377"/>
        <dbReference type="ChEBI" id="CHEBI:30616"/>
        <dbReference type="ChEBI" id="CHEBI:33019"/>
        <dbReference type="ChEBI" id="CHEBI:43474"/>
        <dbReference type="ChEBI" id="CHEBI:57844"/>
        <dbReference type="ChEBI" id="CHEBI:59789"/>
        <dbReference type="EC" id="2.5.1.6"/>
    </reaction>
</comment>
<comment type="cofactor">
    <cofactor evidence="1">
        <name>Mg(2+)</name>
        <dbReference type="ChEBI" id="CHEBI:18420"/>
    </cofactor>
    <text evidence="1">Binds 2 divalent ions per subunit.</text>
</comment>
<comment type="cofactor">
    <cofactor evidence="1">
        <name>K(+)</name>
        <dbReference type="ChEBI" id="CHEBI:29103"/>
    </cofactor>
    <text evidence="1">Binds 1 potassium ion per subunit.</text>
</comment>
<comment type="pathway">
    <text evidence="1">Amino-acid biosynthesis; S-adenosyl-L-methionine biosynthesis; S-adenosyl-L-methionine from L-methionine: step 1/1.</text>
</comment>
<comment type="subunit">
    <text evidence="1">Homotetramer; dimer of dimers.</text>
</comment>
<comment type="subcellular location">
    <subcellularLocation>
        <location evidence="1">Cytoplasm</location>
    </subcellularLocation>
</comment>
<comment type="similarity">
    <text evidence="1">Belongs to the AdoMet synthase family.</text>
</comment>
<accession>A3D0T8</accession>
<dbReference type="EC" id="2.5.1.6" evidence="1"/>
<dbReference type="EMBL" id="CP000563">
    <property type="protein sequence ID" value="ABN60351.1"/>
    <property type="molecule type" value="Genomic_DNA"/>
</dbReference>
<dbReference type="RefSeq" id="WP_011845919.1">
    <property type="nucleotide sequence ID" value="NC_009052.1"/>
</dbReference>
<dbReference type="SMR" id="A3D0T8"/>
<dbReference type="STRING" id="325240.Sbal_0826"/>
<dbReference type="KEGG" id="sbl:Sbal_0826"/>
<dbReference type="HOGENOM" id="CLU_041802_1_1_6"/>
<dbReference type="OrthoDB" id="9801686at2"/>
<dbReference type="UniPathway" id="UPA00315">
    <property type="reaction ID" value="UER00080"/>
</dbReference>
<dbReference type="Proteomes" id="UP000001557">
    <property type="component" value="Chromosome"/>
</dbReference>
<dbReference type="GO" id="GO:0005737">
    <property type="term" value="C:cytoplasm"/>
    <property type="evidence" value="ECO:0007669"/>
    <property type="project" value="UniProtKB-SubCell"/>
</dbReference>
<dbReference type="GO" id="GO:0005524">
    <property type="term" value="F:ATP binding"/>
    <property type="evidence" value="ECO:0007669"/>
    <property type="project" value="UniProtKB-UniRule"/>
</dbReference>
<dbReference type="GO" id="GO:0000287">
    <property type="term" value="F:magnesium ion binding"/>
    <property type="evidence" value="ECO:0007669"/>
    <property type="project" value="UniProtKB-UniRule"/>
</dbReference>
<dbReference type="GO" id="GO:0004478">
    <property type="term" value="F:methionine adenosyltransferase activity"/>
    <property type="evidence" value="ECO:0007669"/>
    <property type="project" value="UniProtKB-UniRule"/>
</dbReference>
<dbReference type="GO" id="GO:0006730">
    <property type="term" value="P:one-carbon metabolic process"/>
    <property type="evidence" value="ECO:0007669"/>
    <property type="project" value="UniProtKB-KW"/>
</dbReference>
<dbReference type="GO" id="GO:0006556">
    <property type="term" value="P:S-adenosylmethionine biosynthetic process"/>
    <property type="evidence" value="ECO:0007669"/>
    <property type="project" value="UniProtKB-UniRule"/>
</dbReference>
<dbReference type="CDD" id="cd18079">
    <property type="entry name" value="S-AdoMet_synt"/>
    <property type="match status" value="1"/>
</dbReference>
<dbReference type="FunFam" id="3.30.300.10:FF:000001">
    <property type="entry name" value="S-adenosylmethionine synthase"/>
    <property type="match status" value="1"/>
</dbReference>
<dbReference type="FunFam" id="3.30.300.10:FF:000003">
    <property type="entry name" value="S-adenosylmethionine synthase"/>
    <property type="match status" value="1"/>
</dbReference>
<dbReference type="FunFam" id="3.30.300.10:FF:000004">
    <property type="entry name" value="S-adenosylmethionine synthase"/>
    <property type="match status" value="1"/>
</dbReference>
<dbReference type="Gene3D" id="3.30.300.10">
    <property type="match status" value="3"/>
</dbReference>
<dbReference type="HAMAP" id="MF_00086">
    <property type="entry name" value="S_AdoMet_synth1"/>
    <property type="match status" value="1"/>
</dbReference>
<dbReference type="InterPro" id="IPR022631">
    <property type="entry name" value="ADOMET_SYNTHASE_CS"/>
</dbReference>
<dbReference type="InterPro" id="IPR022630">
    <property type="entry name" value="S-AdoMet_synt_C"/>
</dbReference>
<dbReference type="InterPro" id="IPR022629">
    <property type="entry name" value="S-AdoMet_synt_central"/>
</dbReference>
<dbReference type="InterPro" id="IPR022628">
    <property type="entry name" value="S-AdoMet_synt_N"/>
</dbReference>
<dbReference type="InterPro" id="IPR002133">
    <property type="entry name" value="S-AdoMet_synthetase"/>
</dbReference>
<dbReference type="InterPro" id="IPR022636">
    <property type="entry name" value="S-AdoMet_synthetase_sfam"/>
</dbReference>
<dbReference type="NCBIfam" id="TIGR01034">
    <property type="entry name" value="metK"/>
    <property type="match status" value="1"/>
</dbReference>
<dbReference type="PANTHER" id="PTHR11964">
    <property type="entry name" value="S-ADENOSYLMETHIONINE SYNTHETASE"/>
    <property type="match status" value="1"/>
</dbReference>
<dbReference type="Pfam" id="PF02773">
    <property type="entry name" value="S-AdoMet_synt_C"/>
    <property type="match status" value="1"/>
</dbReference>
<dbReference type="Pfam" id="PF02772">
    <property type="entry name" value="S-AdoMet_synt_M"/>
    <property type="match status" value="1"/>
</dbReference>
<dbReference type="Pfam" id="PF00438">
    <property type="entry name" value="S-AdoMet_synt_N"/>
    <property type="match status" value="1"/>
</dbReference>
<dbReference type="PIRSF" id="PIRSF000497">
    <property type="entry name" value="MAT"/>
    <property type="match status" value="1"/>
</dbReference>
<dbReference type="SUPFAM" id="SSF55973">
    <property type="entry name" value="S-adenosylmethionine synthetase"/>
    <property type="match status" value="3"/>
</dbReference>
<dbReference type="PROSITE" id="PS00376">
    <property type="entry name" value="ADOMET_SYNTHASE_1"/>
    <property type="match status" value="1"/>
</dbReference>
<dbReference type="PROSITE" id="PS00377">
    <property type="entry name" value="ADOMET_SYNTHASE_2"/>
    <property type="match status" value="1"/>
</dbReference>
<sequence>MAKHLFTSESVSEGHPDKIADQISDAVLDAILAQDPKARVACETYVKTGMVLVGGEVTTSAWVDIEEITRKTVREIGYTHSDMGFDADSCAVLNAIGKQSPDINQGVDRADPAEQGAGDQGLMFGYANNETDVLMPAPITYAHALVKRQSEVRKNGTLPWLRPDAKSQVTFAYDDGKIVGIDAVVLSTQHRDDVSQADLIEGVMETIIKPVLPAQWLNKDTKFFINPTGRFVIGGPVGDCGLTGRKIIVDTYGGMARHGGGAFSGKDPSKVDRSAAYAARYVAKNIVAAGLADRCEIQVSYAIGVAEPTSISIETFGTGKVSEDLLIKLVRQHFELRPYGLTAMLDLARPIYQATAAYGHFGRNEFPWEATDKAEILRADAGL</sequence>
<evidence type="ECO:0000255" key="1">
    <source>
        <dbReference type="HAMAP-Rule" id="MF_00086"/>
    </source>
</evidence>
<feature type="chain" id="PRO_1000007953" description="S-adenosylmethionine synthase">
    <location>
        <begin position="1"/>
        <end position="383"/>
    </location>
</feature>
<feature type="region of interest" description="Flexible loop" evidence="1">
    <location>
        <begin position="99"/>
        <end position="109"/>
    </location>
</feature>
<feature type="binding site" description="in other chain" evidence="1">
    <location>
        <position position="15"/>
    </location>
    <ligand>
        <name>ATP</name>
        <dbReference type="ChEBI" id="CHEBI:30616"/>
        <note>ligand shared between two neighboring subunits</note>
    </ligand>
</feature>
<feature type="binding site" evidence="1">
    <location>
        <position position="17"/>
    </location>
    <ligand>
        <name>Mg(2+)</name>
        <dbReference type="ChEBI" id="CHEBI:18420"/>
    </ligand>
</feature>
<feature type="binding site" evidence="1">
    <location>
        <position position="43"/>
    </location>
    <ligand>
        <name>K(+)</name>
        <dbReference type="ChEBI" id="CHEBI:29103"/>
    </ligand>
</feature>
<feature type="binding site" description="in other chain" evidence="1">
    <location>
        <position position="56"/>
    </location>
    <ligand>
        <name>L-methionine</name>
        <dbReference type="ChEBI" id="CHEBI:57844"/>
        <note>ligand shared between two neighboring subunits</note>
    </ligand>
</feature>
<feature type="binding site" description="in other chain" evidence="1">
    <location>
        <position position="99"/>
    </location>
    <ligand>
        <name>L-methionine</name>
        <dbReference type="ChEBI" id="CHEBI:57844"/>
        <note>ligand shared between two neighboring subunits</note>
    </ligand>
</feature>
<feature type="binding site" description="in other chain" evidence="1">
    <location>
        <begin position="164"/>
        <end position="166"/>
    </location>
    <ligand>
        <name>ATP</name>
        <dbReference type="ChEBI" id="CHEBI:30616"/>
        <note>ligand shared between two neighboring subunits</note>
    </ligand>
</feature>
<feature type="binding site" description="in other chain" evidence="1">
    <location>
        <begin position="230"/>
        <end position="231"/>
    </location>
    <ligand>
        <name>ATP</name>
        <dbReference type="ChEBI" id="CHEBI:30616"/>
        <note>ligand shared between two neighboring subunits</note>
    </ligand>
</feature>
<feature type="binding site" evidence="1">
    <location>
        <position position="239"/>
    </location>
    <ligand>
        <name>ATP</name>
        <dbReference type="ChEBI" id="CHEBI:30616"/>
        <note>ligand shared between two neighboring subunits</note>
    </ligand>
</feature>
<feature type="binding site" evidence="1">
    <location>
        <position position="239"/>
    </location>
    <ligand>
        <name>L-methionine</name>
        <dbReference type="ChEBI" id="CHEBI:57844"/>
        <note>ligand shared between two neighboring subunits</note>
    </ligand>
</feature>
<feature type="binding site" description="in other chain" evidence="1">
    <location>
        <begin position="245"/>
        <end position="246"/>
    </location>
    <ligand>
        <name>ATP</name>
        <dbReference type="ChEBI" id="CHEBI:30616"/>
        <note>ligand shared between two neighboring subunits</note>
    </ligand>
</feature>
<feature type="binding site" evidence="1">
    <location>
        <position position="262"/>
    </location>
    <ligand>
        <name>ATP</name>
        <dbReference type="ChEBI" id="CHEBI:30616"/>
        <note>ligand shared between two neighboring subunits</note>
    </ligand>
</feature>
<feature type="binding site" evidence="1">
    <location>
        <position position="266"/>
    </location>
    <ligand>
        <name>ATP</name>
        <dbReference type="ChEBI" id="CHEBI:30616"/>
        <note>ligand shared between two neighboring subunits</note>
    </ligand>
</feature>
<feature type="binding site" description="in other chain" evidence="1">
    <location>
        <position position="270"/>
    </location>
    <ligand>
        <name>L-methionine</name>
        <dbReference type="ChEBI" id="CHEBI:57844"/>
        <note>ligand shared between two neighboring subunits</note>
    </ligand>
</feature>
<protein>
    <recommendedName>
        <fullName evidence="1">S-adenosylmethionine synthase</fullName>
        <shortName evidence="1">AdoMet synthase</shortName>
        <ecNumber evidence="1">2.5.1.6</ecNumber>
    </recommendedName>
    <alternativeName>
        <fullName evidence="1">MAT</fullName>
    </alternativeName>
    <alternativeName>
        <fullName evidence="1">Methionine adenosyltransferase</fullName>
    </alternativeName>
</protein>
<organism>
    <name type="scientific">Shewanella baltica (strain OS155 / ATCC BAA-1091)</name>
    <dbReference type="NCBI Taxonomy" id="325240"/>
    <lineage>
        <taxon>Bacteria</taxon>
        <taxon>Pseudomonadati</taxon>
        <taxon>Pseudomonadota</taxon>
        <taxon>Gammaproteobacteria</taxon>
        <taxon>Alteromonadales</taxon>
        <taxon>Shewanellaceae</taxon>
        <taxon>Shewanella</taxon>
    </lineage>
</organism>
<keyword id="KW-0067">ATP-binding</keyword>
<keyword id="KW-0963">Cytoplasm</keyword>
<keyword id="KW-0460">Magnesium</keyword>
<keyword id="KW-0479">Metal-binding</keyword>
<keyword id="KW-0547">Nucleotide-binding</keyword>
<keyword id="KW-0554">One-carbon metabolism</keyword>
<keyword id="KW-0630">Potassium</keyword>
<keyword id="KW-1185">Reference proteome</keyword>
<keyword id="KW-0808">Transferase</keyword>
<name>METK_SHEB5</name>
<proteinExistence type="inferred from homology"/>